<name>FTSB_SALPK</name>
<proteinExistence type="inferred from homology"/>
<evidence type="ECO:0000255" key="1">
    <source>
        <dbReference type="HAMAP-Rule" id="MF_00599"/>
    </source>
</evidence>
<keyword id="KW-0131">Cell cycle</keyword>
<keyword id="KW-0132">Cell division</keyword>
<keyword id="KW-0997">Cell inner membrane</keyword>
<keyword id="KW-1003">Cell membrane</keyword>
<keyword id="KW-0175">Coiled coil</keyword>
<keyword id="KW-0472">Membrane</keyword>
<keyword id="KW-0812">Transmembrane</keyword>
<keyword id="KW-1133">Transmembrane helix</keyword>
<comment type="function">
    <text evidence="1">Essential cell division protein. May link together the upstream cell division proteins, which are predominantly cytoplasmic, with the downstream cell division proteins, which are predominantly periplasmic.</text>
</comment>
<comment type="subunit">
    <text evidence="1">Part of a complex composed of FtsB, FtsL and FtsQ.</text>
</comment>
<comment type="subcellular location">
    <subcellularLocation>
        <location evidence="1">Cell inner membrane</location>
        <topology evidence="1">Single-pass type II membrane protein</topology>
    </subcellularLocation>
    <text evidence="1">Localizes to the division septum.</text>
</comment>
<comment type="similarity">
    <text evidence="1">Belongs to the FtsB family.</text>
</comment>
<accession>B5BEY5</accession>
<gene>
    <name evidence="1" type="primary">ftsB</name>
    <name type="ordered locus">SSPA2599</name>
</gene>
<protein>
    <recommendedName>
        <fullName evidence="1">Cell division protein FtsB</fullName>
    </recommendedName>
</protein>
<dbReference type="EMBL" id="FM200053">
    <property type="protein sequence ID" value="CAR60837.1"/>
    <property type="molecule type" value="Genomic_DNA"/>
</dbReference>
<dbReference type="RefSeq" id="WP_000517480.1">
    <property type="nucleotide sequence ID" value="NC_011147.1"/>
</dbReference>
<dbReference type="SMR" id="B5BEY5"/>
<dbReference type="KEGG" id="sek:SSPA2599"/>
<dbReference type="HOGENOM" id="CLU_134863_5_2_6"/>
<dbReference type="Proteomes" id="UP000001869">
    <property type="component" value="Chromosome"/>
</dbReference>
<dbReference type="GO" id="GO:0032153">
    <property type="term" value="C:cell division site"/>
    <property type="evidence" value="ECO:0007669"/>
    <property type="project" value="UniProtKB-UniRule"/>
</dbReference>
<dbReference type="GO" id="GO:0030428">
    <property type="term" value="C:cell septum"/>
    <property type="evidence" value="ECO:0007669"/>
    <property type="project" value="TreeGrafter"/>
</dbReference>
<dbReference type="GO" id="GO:0005886">
    <property type="term" value="C:plasma membrane"/>
    <property type="evidence" value="ECO:0007669"/>
    <property type="project" value="UniProtKB-SubCell"/>
</dbReference>
<dbReference type="GO" id="GO:0043093">
    <property type="term" value="P:FtsZ-dependent cytokinesis"/>
    <property type="evidence" value="ECO:0007669"/>
    <property type="project" value="UniProtKB-UniRule"/>
</dbReference>
<dbReference type="FunFam" id="1.20.5.400:FF:000001">
    <property type="entry name" value="Cell division protein FtsB"/>
    <property type="match status" value="1"/>
</dbReference>
<dbReference type="Gene3D" id="1.20.5.400">
    <property type="match status" value="1"/>
</dbReference>
<dbReference type="HAMAP" id="MF_00599">
    <property type="entry name" value="FtsB"/>
    <property type="match status" value="1"/>
</dbReference>
<dbReference type="InterPro" id="IPR023081">
    <property type="entry name" value="Cell_div_FtsB"/>
</dbReference>
<dbReference type="InterPro" id="IPR007060">
    <property type="entry name" value="FtsL/DivIC"/>
</dbReference>
<dbReference type="NCBIfam" id="NF002058">
    <property type="entry name" value="PRK00888.1"/>
    <property type="match status" value="1"/>
</dbReference>
<dbReference type="PANTHER" id="PTHR37485">
    <property type="entry name" value="CELL DIVISION PROTEIN FTSB"/>
    <property type="match status" value="1"/>
</dbReference>
<dbReference type="PANTHER" id="PTHR37485:SF1">
    <property type="entry name" value="CELL DIVISION PROTEIN FTSB"/>
    <property type="match status" value="1"/>
</dbReference>
<dbReference type="Pfam" id="PF04977">
    <property type="entry name" value="DivIC"/>
    <property type="match status" value="1"/>
</dbReference>
<organism>
    <name type="scientific">Salmonella paratyphi A (strain AKU_12601)</name>
    <dbReference type="NCBI Taxonomy" id="554290"/>
    <lineage>
        <taxon>Bacteria</taxon>
        <taxon>Pseudomonadati</taxon>
        <taxon>Pseudomonadota</taxon>
        <taxon>Gammaproteobacteria</taxon>
        <taxon>Enterobacterales</taxon>
        <taxon>Enterobacteriaceae</taxon>
        <taxon>Salmonella</taxon>
    </lineage>
</organism>
<sequence length="103" mass="11575">MGKLTLLLLALLVWLQYSLWFGKNGIHDYSRVNDDVVAQQATNAKLKARNDQLFAEIDDLNGGQEAIEERARNELSMTKPGETFYRLVPDASKRAATAGQTHR</sequence>
<reference key="1">
    <citation type="journal article" date="2009" name="BMC Genomics">
        <title>Pseudogene accumulation in the evolutionary histories of Salmonella enterica serovars Paratyphi A and Typhi.</title>
        <authorList>
            <person name="Holt K.E."/>
            <person name="Thomson N.R."/>
            <person name="Wain J."/>
            <person name="Langridge G.C."/>
            <person name="Hasan R."/>
            <person name="Bhutta Z.A."/>
            <person name="Quail M.A."/>
            <person name="Norbertczak H."/>
            <person name="Walker D."/>
            <person name="Simmonds M."/>
            <person name="White B."/>
            <person name="Bason N."/>
            <person name="Mungall K."/>
            <person name="Dougan G."/>
            <person name="Parkhill J."/>
        </authorList>
    </citation>
    <scope>NUCLEOTIDE SEQUENCE [LARGE SCALE GENOMIC DNA]</scope>
    <source>
        <strain>AKU_12601</strain>
    </source>
</reference>
<feature type="chain" id="PRO_1000129943" description="Cell division protein FtsB">
    <location>
        <begin position="1"/>
        <end position="103"/>
    </location>
</feature>
<feature type="topological domain" description="Cytoplasmic" evidence="1">
    <location>
        <begin position="1"/>
        <end position="3"/>
    </location>
</feature>
<feature type="transmembrane region" description="Helical" evidence="1">
    <location>
        <begin position="4"/>
        <end position="21"/>
    </location>
</feature>
<feature type="topological domain" description="Periplasmic" evidence="1">
    <location>
        <begin position="22"/>
        <end position="103"/>
    </location>
</feature>
<feature type="coiled-coil region" evidence="1">
    <location>
        <begin position="33"/>
        <end position="62"/>
    </location>
</feature>